<comment type="function">
    <text evidence="1">Activates lipidic moieties required for mycobactin biosynthesis. Converts medium- to long-chain aliphatic fatty acids into acyl adenylate, which is further transferred on to the phosphopantetheine arm of the carrier protein MbtL.</text>
</comment>
<comment type="catalytic activity">
    <reaction evidence="1">
        <text>a long-chain fatty acid + holo-[ACP] + ATP = a long-chain fatty acyl-[ACP] + AMP + diphosphate</text>
        <dbReference type="Rhea" id="RHEA:45588"/>
        <dbReference type="Rhea" id="RHEA-COMP:9685"/>
        <dbReference type="Rhea" id="RHEA-COMP:12682"/>
        <dbReference type="ChEBI" id="CHEBI:30616"/>
        <dbReference type="ChEBI" id="CHEBI:33019"/>
        <dbReference type="ChEBI" id="CHEBI:57560"/>
        <dbReference type="ChEBI" id="CHEBI:64479"/>
        <dbReference type="ChEBI" id="CHEBI:133243"/>
        <dbReference type="ChEBI" id="CHEBI:456215"/>
        <dbReference type="EC" id="6.2.1.20"/>
    </reaction>
</comment>
<comment type="catalytic activity">
    <reaction evidence="1">
        <text>a medium-chain fatty acid + holo-[ACP] + ATP = a medium-chain fatty acyl-[ACP] + AMP + diphosphate</text>
        <dbReference type="Rhea" id="RHEA:50460"/>
        <dbReference type="Rhea" id="RHEA-COMP:9685"/>
        <dbReference type="Rhea" id="RHEA-COMP:12681"/>
        <dbReference type="ChEBI" id="CHEBI:30616"/>
        <dbReference type="ChEBI" id="CHEBI:33019"/>
        <dbReference type="ChEBI" id="CHEBI:59558"/>
        <dbReference type="ChEBI" id="CHEBI:64479"/>
        <dbReference type="ChEBI" id="CHEBI:133242"/>
        <dbReference type="ChEBI" id="CHEBI:456215"/>
        <dbReference type="EC" id="6.2.1.47"/>
    </reaction>
</comment>
<comment type="pathway">
    <text evidence="1">Siderophore biosynthesis; mycobactin biosynthesis.</text>
</comment>
<comment type="similarity">
    <text evidence="2">Belongs to the ATP-dependent AMP-binding enzyme family.</text>
</comment>
<comment type="sequence caution" evidence="2">
    <conflict type="frameshift">
        <sequence resource="EMBL-CDS" id="AAK45651"/>
    </conflict>
</comment>
<evidence type="ECO:0000250" key="1">
    <source>
        <dbReference type="UniProtKB" id="A0QUA1"/>
    </source>
</evidence>
<evidence type="ECO:0000305" key="2"/>
<organism>
    <name type="scientific">Mycobacterium tuberculosis (strain CDC 1551 / Oshkosh)</name>
    <dbReference type="NCBI Taxonomy" id="83331"/>
    <lineage>
        <taxon>Bacteria</taxon>
        <taxon>Bacillati</taxon>
        <taxon>Actinomycetota</taxon>
        <taxon>Actinomycetes</taxon>
        <taxon>Mycobacteriales</taxon>
        <taxon>Mycobacteriaceae</taxon>
        <taxon>Mycobacterium</taxon>
        <taxon>Mycobacterium tuberculosis complex</taxon>
    </lineage>
</organism>
<dbReference type="EC" id="6.2.1.20" evidence="1"/>
<dbReference type="EC" id="6.2.1.47" evidence="1"/>
<dbReference type="EMBL" id="AE000516">
    <property type="protein sequence ID" value="AAK45651.1"/>
    <property type="status" value="ALT_FRAME"/>
    <property type="molecule type" value="Genomic_DNA"/>
</dbReference>
<dbReference type="PIR" id="H70739">
    <property type="entry name" value="H70739"/>
</dbReference>
<dbReference type="SMR" id="P9WQ40"/>
<dbReference type="KEGG" id="mtc:MT1387"/>
<dbReference type="HOGENOM" id="CLU_000022_23_7_11"/>
<dbReference type="UniPathway" id="UPA00011"/>
<dbReference type="Proteomes" id="UP000001020">
    <property type="component" value="Chromosome"/>
</dbReference>
<dbReference type="GO" id="GO:0005886">
    <property type="term" value="C:plasma membrane"/>
    <property type="evidence" value="ECO:0007669"/>
    <property type="project" value="TreeGrafter"/>
</dbReference>
<dbReference type="GO" id="GO:0070566">
    <property type="term" value="F:adenylyltransferase activity"/>
    <property type="evidence" value="ECO:0007669"/>
    <property type="project" value="TreeGrafter"/>
</dbReference>
<dbReference type="GO" id="GO:0005524">
    <property type="term" value="F:ATP binding"/>
    <property type="evidence" value="ECO:0007669"/>
    <property type="project" value="UniProtKB-KW"/>
</dbReference>
<dbReference type="GO" id="GO:0008922">
    <property type="term" value="F:long-chain fatty acid [acyl-carrier-protein] ligase activity"/>
    <property type="evidence" value="ECO:0007669"/>
    <property type="project" value="UniProtKB-EC"/>
</dbReference>
<dbReference type="GO" id="GO:0006633">
    <property type="term" value="P:fatty acid biosynthetic process"/>
    <property type="evidence" value="ECO:0007669"/>
    <property type="project" value="TreeGrafter"/>
</dbReference>
<dbReference type="FunFam" id="3.40.50.12780:FF:000071">
    <property type="entry name" value="Long-chain-fatty-acid--ACP ligase MbtM"/>
    <property type="match status" value="1"/>
</dbReference>
<dbReference type="Gene3D" id="3.30.300.30">
    <property type="match status" value="1"/>
</dbReference>
<dbReference type="Gene3D" id="3.40.50.12780">
    <property type="entry name" value="N-terminal domain of ligase-like"/>
    <property type="match status" value="1"/>
</dbReference>
<dbReference type="InterPro" id="IPR045851">
    <property type="entry name" value="AMP-bd_C_sf"/>
</dbReference>
<dbReference type="InterPro" id="IPR020845">
    <property type="entry name" value="AMP-binding_CS"/>
</dbReference>
<dbReference type="InterPro" id="IPR000873">
    <property type="entry name" value="AMP-dep_synth/lig_dom"/>
</dbReference>
<dbReference type="InterPro" id="IPR042099">
    <property type="entry name" value="ANL_N_sf"/>
</dbReference>
<dbReference type="NCBIfam" id="NF004510">
    <property type="entry name" value="PRK05851.1"/>
    <property type="match status" value="1"/>
</dbReference>
<dbReference type="PANTHER" id="PTHR22754:SF32">
    <property type="entry name" value="DISCO-INTERACTING PROTEIN 2"/>
    <property type="match status" value="1"/>
</dbReference>
<dbReference type="PANTHER" id="PTHR22754">
    <property type="entry name" value="DISCO-INTERACTING PROTEIN 2 DIP2 -RELATED"/>
    <property type="match status" value="1"/>
</dbReference>
<dbReference type="Pfam" id="PF00501">
    <property type="entry name" value="AMP-binding"/>
    <property type="match status" value="1"/>
</dbReference>
<dbReference type="SUPFAM" id="SSF56801">
    <property type="entry name" value="Acetyl-CoA synthetase-like"/>
    <property type="match status" value="1"/>
</dbReference>
<dbReference type="PROSITE" id="PS00455">
    <property type="entry name" value="AMP_BINDING"/>
    <property type="match status" value="1"/>
</dbReference>
<gene>
    <name type="primary">mbtM</name>
    <name type="synonym">fadD33</name>
    <name type="ordered locus">MT1387</name>
</gene>
<keyword id="KW-0067">ATP-binding</keyword>
<keyword id="KW-0436">Ligase</keyword>
<keyword id="KW-0547">Nucleotide-binding</keyword>
<keyword id="KW-1185">Reference proteome</keyword>
<feature type="chain" id="PRO_0000426842" description="Medium/long-chain-fatty-acid--[acyl-carrier-protein] ligase MbtM">
    <location>
        <begin position="1"/>
        <end position="521"/>
    </location>
</feature>
<reference key="1">
    <citation type="journal article" date="2002" name="J. Bacteriol.">
        <title>Whole-genome comparison of Mycobacterium tuberculosis clinical and laboratory strains.</title>
        <authorList>
            <person name="Fleischmann R.D."/>
            <person name="Alland D."/>
            <person name="Eisen J.A."/>
            <person name="Carpenter L."/>
            <person name="White O."/>
            <person name="Peterson J.D."/>
            <person name="DeBoy R.T."/>
            <person name="Dodson R.J."/>
            <person name="Gwinn M.L."/>
            <person name="Haft D.H."/>
            <person name="Hickey E.K."/>
            <person name="Kolonay J.F."/>
            <person name="Nelson W.C."/>
            <person name="Umayam L.A."/>
            <person name="Ermolaeva M.D."/>
            <person name="Salzberg S.L."/>
            <person name="Delcher A."/>
            <person name="Utterback T.R."/>
            <person name="Weidman J.F."/>
            <person name="Khouri H.M."/>
            <person name="Gill J."/>
            <person name="Mikula A."/>
            <person name="Bishai W."/>
            <person name="Jacobs W.R. Jr."/>
            <person name="Venter J.C."/>
            <person name="Fraser C.M."/>
        </authorList>
    </citation>
    <scope>NUCLEOTIDE SEQUENCE [LARGE SCALE GENOMIC DNA]</scope>
    <source>
        <strain>CDC 1551 / Oshkosh</strain>
    </source>
</reference>
<protein>
    <recommendedName>
        <fullName evidence="1">Medium/long-chain-fatty-acid--[acyl-carrier-protein] ligase MbtM</fullName>
        <ecNumber evidence="1">6.2.1.20</ecNumber>
        <ecNumber evidence="1">6.2.1.47</ecNumber>
    </recommendedName>
    <alternativeName>
        <fullName evidence="1">Fatty acyl-[acyl-carrier-protein] synthetase</fullName>
        <shortName evidence="1">Fatty acyl-ACP synthetase</shortName>
    </alternativeName>
    <alternativeName>
        <fullName evidence="1">Mycobactin synthetase protein M</fullName>
    </alternativeName>
</protein>
<name>MBTM_MYCTO</name>
<accession>P9WQ40</accession>
<accession>L0T9C8</accession>
<accession>P0A4X8</accession>
<accession>Q11015</accession>
<proteinExistence type="inferred from homology"/>
<sequence length="521" mass="53975">MSELAAVLTRSMQASAGDLMVLDRETSLWCRHPWPEVHGLAESVCGWLLDHDRPAAVGLVGEPTVELVAAIQGAWLAGAAVSILPGPVRGANDQRWADATLTRFLGIGVRTVLSQGSYLARLRSVDTAGVTIGDLSTAAHTNRSATPVASEGPAVLQGTAGSTGAPRTAILSPGAVLSNLRGLNQRVGTDAATDVGCSWLPLYHDMGLAFVLSAALAGAPLWLAPTTAFTASPFRWLSWLSDSGATMTAAPNFAYNLIGKYARRVSEVDLGALRVTLNGGEPVDCDGLTRFAEAMAPFGFDAGAVLPSYGLAESTCAVTVPVPGIGLLADRVIDGSGAHKHAVLGNPIPGMEVRISCGDQAAGNASREIGEIEIRGASMMAGYLGQQPIDPDDWFATGDLGYLGAGGLVVCGRAKEVISIAGRNIFPTEVELVAAQVRGVREGAVVALGTGDRSTRPGLVVAAEFRGPDEANARAELIQRVASECGIVPSDVVFVSPGSLPRTSSGKLRRLAVRRSLEMAD</sequence>